<proteinExistence type="inferred from homology"/>
<name>ATPB_CERS5</name>
<dbReference type="EC" id="7.1.2.2" evidence="1"/>
<dbReference type="EMBL" id="CP000661">
    <property type="protein sequence ID" value="ABP71091.1"/>
    <property type="molecule type" value="Genomic_DNA"/>
</dbReference>
<dbReference type="SMR" id="A4WUM7"/>
<dbReference type="STRING" id="349102.Rsph17025_2201"/>
<dbReference type="KEGG" id="rsq:Rsph17025_2201"/>
<dbReference type="eggNOG" id="COG0055">
    <property type="taxonomic scope" value="Bacteria"/>
</dbReference>
<dbReference type="HOGENOM" id="CLU_022398_0_2_5"/>
<dbReference type="BioCyc" id="RSPH349102:G1G8M-2269-MONOMER"/>
<dbReference type="GO" id="GO:0005886">
    <property type="term" value="C:plasma membrane"/>
    <property type="evidence" value="ECO:0007669"/>
    <property type="project" value="UniProtKB-SubCell"/>
</dbReference>
<dbReference type="GO" id="GO:0045259">
    <property type="term" value="C:proton-transporting ATP synthase complex"/>
    <property type="evidence" value="ECO:0007669"/>
    <property type="project" value="UniProtKB-KW"/>
</dbReference>
<dbReference type="GO" id="GO:0005524">
    <property type="term" value="F:ATP binding"/>
    <property type="evidence" value="ECO:0007669"/>
    <property type="project" value="UniProtKB-UniRule"/>
</dbReference>
<dbReference type="GO" id="GO:0016887">
    <property type="term" value="F:ATP hydrolysis activity"/>
    <property type="evidence" value="ECO:0007669"/>
    <property type="project" value="InterPro"/>
</dbReference>
<dbReference type="GO" id="GO:0046933">
    <property type="term" value="F:proton-transporting ATP synthase activity, rotational mechanism"/>
    <property type="evidence" value="ECO:0007669"/>
    <property type="project" value="UniProtKB-UniRule"/>
</dbReference>
<dbReference type="CDD" id="cd18110">
    <property type="entry name" value="ATP-synt_F1_beta_C"/>
    <property type="match status" value="1"/>
</dbReference>
<dbReference type="CDD" id="cd18115">
    <property type="entry name" value="ATP-synt_F1_beta_N"/>
    <property type="match status" value="1"/>
</dbReference>
<dbReference type="CDD" id="cd01133">
    <property type="entry name" value="F1-ATPase_beta_CD"/>
    <property type="match status" value="1"/>
</dbReference>
<dbReference type="FunFam" id="1.10.1140.10:FF:000001">
    <property type="entry name" value="ATP synthase subunit beta"/>
    <property type="match status" value="1"/>
</dbReference>
<dbReference type="FunFam" id="2.40.10.170:FF:000005">
    <property type="entry name" value="ATP synthase subunit beta"/>
    <property type="match status" value="1"/>
</dbReference>
<dbReference type="FunFam" id="3.40.50.300:FF:000026">
    <property type="entry name" value="ATP synthase subunit beta"/>
    <property type="match status" value="1"/>
</dbReference>
<dbReference type="Gene3D" id="2.40.10.170">
    <property type="match status" value="1"/>
</dbReference>
<dbReference type="Gene3D" id="1.10.1140.10">
    <property type="entry name" value="Bovine Mitochondrial F1-atpase, Atp Synthase Beta Chain, Chain D, domain 3"/>
    <property type="match status" value="1"/>
</dbReference>
<dbReference type="Gene3D" id="3.40.50.300">
    <property type="entry name" value="P-loop containing nucleotide triphosphate hydrolases"/>
    <property type="match status" value="1"/>
</dbReference>
<dbReference type="HAMAP" id="MF_01347">
    <property type="entry name" value="ATP_synth_beta_bact"/>
    <property type="match status" value="1"/>
</dbReference>
<dbReference type="InterPro" id="IPR003593">
    <property type="entry name" value="AAA+_ATPase"/>
</dbReference>
<dbReference type="InterPro" id="IPR055190">
    <property type="entry name" value="ATP-synt_VA_C"/>
</dbReference>
<dbReference type="InterPro" id="IPR005722">
    <property type="entry name" value="ATP_synth_F1_bsu"/>
</dbReference>
<dbReference type="InterPro" id="IPR020003">
    <property type="entry name" value="ATPase_a/bsu_AS"/>
</dbReference>
<dbReference type="InterPro" id="IPR050053">
    <property type="entry name" value="ATPase_alpha/beta_chains"/>
</dbReference>
<dbReference type="InterPro" id="IPR004100">
    <property type="entry name" value="ATPase_F1/V1/A1_a/bsu_N"/>
</dbReference>
<dbReference type="InterPro" id="IPR036121">
    <property type="entry name" value="ATPase_F1/V1/A1_a/bsu_N_sf"/>
</dbReference>
<dbReference type="InterPro" id="IPR000194">
    <property type="entry name" value="ATPase_F1/V1/A1_a/bsu_nucl-bd"/>
</dbReference>
<dbReference type="InterPro" id="IPR024034">
    <property type="entry name" value="ATPase_F1/V1_b/a_C"/>
</dbReference>
<dbReference type="InterPro" id="IPR027417">
    <property type="entry name" value="P-loop_NTPase"/>
</dbReference>
<dbReference type="NCBIfam" id="TIGR01039">
    <property type="entry name" value="atpD"/>
    <property type="match status" value="1"/>
</dbReference>
<dbReference type="PANTHER" id="PTHR15184">
    <property type="entry name" value="ATP SYNTHASE"/>
    <property type="match status" value="1"/>
</dbReference>
<dbReference type="PANTHER" id="PTHR15184:SF71">
    <property type="entry name" value="ATP SYNTHASE SUBUNIT BETA, MITOCHONDRIAL"/>
    <property type="match status" value="1"/>
</dbReference>
<dbReference type="Pfam" id="PF00006">
    <property type="entry name" value="ATP-synt_ab"/>
    <property type="match status" value="1"/>
</dbReference>
<dbReference type="Pfam" id="PF02874">
    <property type="entry name" value="ATP-synt_ab_N"/>
    <property type="match status" value="1"/>
</dbReference>
<dbReference type="Pfam" id="PF22919">
    <property type="entry name" value="ATP-synt_VA_C"/>
    <property type="match status" value="1"/>
</dbReference>
<dbReference type="PIRSF" id="PIRSF039072">
    <property type="entry name" value="ATPase_subunit_beta"/>
    <property type="match status" value="1"/>
</dbReference>
<dbReference type="SMART" id="SM00382">
    <property type="entry name" value="AAA"/>
    <property type="match status" value="1"/>
</dbReference>
<dbReference type="SUPFAM" id="SSF47917">
    <property type="entry name" value="C-terminal domain of alpha and beta subunits of F1 ATP synthase"/>
    <property type="match status" value="1"/>
</dbReference>
<dbReference type="SUPFAM" id="SSF50615">
    <property type="entry name" value="N-terminal domain of alpha and beta subunits of F1 ATP synthase"/>
    <property type="match status" value="1"/>
</dbReference>
<dbReference type="SUPFAM" id="SSF52540">
    <property type="entry name" value="P-loop containing nucleoside triphosphate hydrolases"/>
    <property type="match status" value="1"/>
</dbReference>
<dbReference type="PROSITE" id="PS00152">
    <property type="entry name" value="ATPASE_ALPHA_BETA"/>
    <property type="match status" value="1"/>
</dbReference>
<evidence type="ECO:0000255" key="1">
    <source>
        <dbReference type="HAMAP-Rule" id="MF_01347"/>
    </source>
</evidence>
<comment type="function">
    <text evidence="1">Produces ATP from ADP in the presence of a proton gradient across the membrane. The catalytic sites are hosted primarily by the beta subunits.</text>
</comment>
<comment type="catalytic activity">
    <reaction evidence="1">
        <text>ATP + H2O + 4 H(+)(in) = ADP + phosphate + 5 H(+)(out)</text>
        <dbReference type="Rhea" id="RHEA:57720"/>
        <dbReference type="ChEBI" id="CHEBI:15377"/>
        <dbReference type="ChEBI" id="CHEBI:15378"/>
        <dbReference type="ChEBI" id="CHEBI:30616"/>
        <dbReference type="ChEBI" id="CHEBI:43474"/>
        <dbReference type="ChEBI" id="CHEBI:456216"/>
        <dbReference type="EC" id="7.1.2.2"/>
    </reaction>
</comment>
<comment type="subunit">
    <text evidence="1">F-type ATPases have 2 components, CF(1) - the catalytic core - and CF(0) - the membrane proton channel. CF(1) has five subunits: alpha(3), beta(3), gamma(1), delta(1), epsilon(1). CF(0) has four main subunits: a(1), b(1), b'(1) and c(9-12).</text>
</comment>
<comment type="subcellular location">
    <subcellularLocation>
        <location evidence="1">Cell inner membrane</location>
        <topology evidence="1">Peripheral membrane protein</topology>
    </subcellularLocation>
</comment>
<comment type="similarity">
    <text evidence="1">Belongs to the ATPase alpha/beta chains family.</text>
</comment>
<gene>
    <name evidence="1" type="primary">atpD</name>
    <name type="ordered locus">Rsph17025_2201</name>
</gene>
<sequence length="475" mass="50350">MATASQGKVTQVIGAVVDVQFDGGLPAILNALETVNNDKRLVLEVAQHLGENTVRTIAMDATEGLVRGAPVTDLGGPISVPVGDATLGRILNVIGEPIDEKGPVSGDSTRAIHQPAPTFAEQSTTSEILVTGIKVIDLLAPYSKGGKIGLFGGAGVGKTVLIMELINNIAKVHSGYSVFAGVGERTREGNDLYHEMIDSGVIKIDNLSESKVALVYGQMNEPPGARARVALTGLTLAEQFRDQSGTDVLFFVDNIFRFTQAGSEVSALLGRIPSAVGYQPTLATDMGALQERITSTKAGSITSVQAIYVPADDLTDPAPATSFAHLDATTVLSRAISELGIYPAVDPLDSTSRILDPQIVGEEHYNVARAVQGILQRYKSLQDIIAILGMDELSEEDKLTVARARKIQRFLSQPFDVAKVFTGSDGVQVPLEKTIASFKAVVNGEYDHLPEAAFYMVGDIEDVIAKAQRLAAQAA</sequence>
<reference key="1">
    <citation type="submission" date="2007-04" db="EMBL/GenBank/DDBJ databases">
        <title>Complete sequence of chromosome of Rhodobacter sphaeroides ATCC 17025.</title>
        <authorList>
            <consortium name="US DOE Joint Genome Institute"/>
            <person name="Copeland A."/>
            <person name="Lucas S."/>
            <person name="Lapidus A."/>
            <person name="Barry K."/>
            <person name="Detter J.C."/>
            <person name="Glavina del Rio T."/>
            <person name="Hammon N."/>
            <person name="Israni S."/>
            <person name="Dalin E."/>
            <person name="Tice H."/>
            <person name="Pitluck S."/>
            <person name="Chertkov O."/>
            <person name="Brettin T."/>
            <person name="Bruce D."/>
            <person name="Han C."/>
            <person name="Schmutz J."/>
            <person name="Larimer F."/>
            <person name="Land M."/>
            <person name="Hauser L."/>
            <person name="Kyrpides N."/>
            <person name="Kim E."/>
            <person name="Richardson P."/>
            <person name="Mackenzie C."/>
            <person name="Choudhary M."/>
            <person name="Donohue T.J."/>
            <person name="Kaplan S."/>
        </authorList>
    </citation>
    <scope>NUCLEOTIDE SEQUENCE [LARGE SCALE GENOMIC DNA]</scope>
    <source>
        <strain>ATCC 17025 / ATH 2.4.3</strain>
    </source>
</reference>
<keyword id="KW-0066">ATP synthesis</keyword>
<keyword id="KW-0067">ATP-binding</keyword>
<keyword id="KW-0997">Cell inner membrane</keyword>
<keyword id="KW-1003">Cell membrane</keyword>
<keyword id="KW-0139">CF(1)</keyword>
<keyword id="KW-0375">Hydrogen ion transport</keyword>
<keyword id="KW-0406">Ion transport</keyword>
<keyword id="KW-0472">Membrane</keyword>
<keyword id="KW-0547">Nucleotide-binding</keyword>
<keyword id="KW-1278">Translocase</keyword>
<keyword id="KW-0813">Transport</keyword>
<feature type="chain" id="PRO_1000086918" description="ATP synthase subunit beta">
    <location>
        <begin position="1"/>
        <end position="475"/>
    </location>
</feature>
<feature type="binding site" evidence="1">
    <location>
        <begin position="152"/>
        <end position="159"/>
    </location>
    <ligand>
        <name>ATP</name>
        <dbReference type="ChEBI" id="CHEBI:30616"/>
    </ligand>
</feature>
<accession>A4WUM7</accession>
<organism>
    <name type="scientific">Cereibacter sphaeroides (strain ATCC 17025 / ATH 2.4.3)</name>
    <name type="common">Rhodobacter sphaeroides</name>
    <dbReference type="NCBI Taxonomy" id="349102"/>
    <lineage>
        <taxon>Bacteria</taxon>
        <taxon>Pseudomonadati</taxon>
        <taxon>Pseudomonadota</taxon>
        <taxon>Alphaproteobacteria</taxon>
        <taxon>Rhodobacterales</taxon>
        <taxon>Paracoccaceae</taxon>
        <taxon>Cereibacter</taxon>
    </lineage>
</organism>
<protein>
    <recommendedName>
        <fullName evidence="1">ATP synthase subunit beta</fullName>
        <ecNumber evidence="1">7.1.2.2</ecNumber>
    </recommendedName>
    <alternativeName>
        <fullName evidence="1">ATP synthase F1 sector subunit beta</fullName>
    </alternativeName>
    <alternativeName>
        <fullName evidence="1">F-ATPase subunit beta</fullName>
    </alternativeName>
</protein>